<keyword id="KW-0963">Cytoplasm</keyword>
<keyword id="KW-0489">Methyltransferase</keyword>
<keyword id="KW-0698">rRNA processing</keyword>
<keyword id="KW-0949">S-adenosyl-L-methionine</keyword>
<keyword id="KW-0808">Transferase</keyword>
<name>RSMG_MYCA1</name>
<gene>
    <name evidence="1" type="primary">rsmG</name>
    <name type="ordered locus">MAV_5308</name>
</gene>
<feature type="chain" id="PRO_1000075224" description="Ribosomal RNA small subunit methyltransferase G">
    <location>
        <begin position="1"/>
        <end position="245"/>
    </location>
</feature>
<feature type="region of interest" description="Disordered" evidence="2">
    <location>
        <begin position="223"/>
        <end position="245"/>
    </location>
</feature>
<feature type="compositionally biased region" description="Basic residues" evidence="2">
    <location>
        <begin position="227"/>
        <end position="245"/>
    </location>
</feature>
<feature type="binding site" evidence="1">
    <location>
        <position position="90"/>
    </location>
    <ligand>
        <name>S-adenosyl-L-methionine</name>
        <dbReference type="ChEBI" id="CHEBI:59789"/>
    </ligand>
</feature>
<feature type="binding site" evidence="1">
    <location>
        <position position="95"/>
    </location>
    <ligand>
        <name>S-adenosyl-L-methionine</name>
        <dbReference type="ChEBI" id="CHEBI:59789"/>
    </ligand>
</feature>
<feature type="binding site" evidence="1">
    <location>
        <begin position="140"/>
        <end position="141"/>
    </location>
    <ligand>
        <name>S-adenosyl-L-methionine</name>
        <dbReference type="ChEBI" id="CHEBI:59789"/>
    </ligand>
</feature>
<feature type="binding site" evidence="1">
    <location>
        <position position="158"/>
    </location>
    <ligand>
        <name>S-adenosyl-L-methionine</name>
        <dbReference type="ChEBI" id="CHEBI:59789"/>
    </ligand>
</feature>
<protein>
    <recommendedName>
        <fullName evidence="1">Ribosomal RNA small subunit methyltransferase G</fullName>
        <ecNumber evidence="1">2.1.1.-</ecNumber>
    </recommendedName>
    <alternativeName>
        <fullName evidence="1">16S rRNA 7-methylguanosine methyltransferase</fullName>
        <shortName evidence="1">16S rRNA m7G methyltransferase</shortName>
    </alternativeName>
</protein>
<sequence>MKHVGPVEPAAGGPEVPPVAALGAAPESAAALFGPRLATAQRYAEVLGTAGVERGLLGPREVDRIWDRHILNSAAVAGLLGRGDRIIDIGSGAGLPGIPLAIARPDLEVVLLEPLLRRSEFLTEVVDELGLAVEVVRGRAEERPVRNRFGDRDAAVSRAVAALDKLTKWSMPLLRHDGRMLAIKGERAAEEVDRYRRVMTASGAADVRVVTCGANYLRPPATVVSARRAKPPHPKSARTGKAGTR</sequence>
<comment type="function">
    <text evidence="1">Specifically methylates the N7 position of guanine in position 518 of 16S rRNA.</text>
</comment>
<comment type="subcellular location">
    <subcellularLocation>
        <location evidence="1">Cytoplasm</location>
    </subcellularLocation>
</comment>
<comment type="similarity">
    <text evidence="1">Belongs to the methyltransferase superfamily. RNA methyltransferase RsmG family.</text>
</comment>
<evidence type="ECO:0000255" key="1">
    <source>
        <dbReference type="HAMAP-Rule" id="MF_00074"/>
    </source>
</evidence>
<evidence type="ECO:0000256" key="2">
    <source>
        <dbReference type="SAM" id="MobiDB-lite"/>
    </source>
</evidence>
<reference key="1">
    <citation type="submission" date="2006-10" db="EMBL/GenBank/DDBJ databases">
        <authorList>
            <person name="Fleischmann R.D."/>
            <person name="Dodson R.J."/>
            <person name="Haft D.H."/>
            <person name="Merkel J.S."/>
            <person name="Nelson W.C."/>
            <person name="Fraser C.M."/>
        </authorList>
    </citation>
    <scope>NUCLEOTIDE SEQUENCE [LARGE SCALE GENOMIC DNA]</scope>
    <source>
        <strain>104</strain>
    </source>
</reference>
<organism>
    <name type="scientific">Mycobacterium avium (strain 104)</name>
    <dbReference type="NCBI Taxonomy" id="243243"/>
    <lineage>
        <taxon>Bacteria</taxon>
        <taxon>Bacillati</taxon>
        <taxon>Actinomycetota</taxon>
        <taxon>Actinomycetes</taxon>
        <taxon>Mycobacteriales</taxon>
        <taxon>Mycobacteriaceae</taxon>
        <taxon>Mycobacterium</taxon>
        <taxon>Mycobacterium avium complex (MAC)</taxon>
    </lineage>
</organism>
<accession>A0QND0</accession>
<dbReference type="EC" id="2.1.1.-" evidence="1"/>
<dbReference type="EMBL" id="CP000479">
    <property type="protein sequence ID" value="ABK65011.1"/>
    <property type="molecule type" value="Genomic_DNA"/>
</dbReference>
<dbReference type="SMR" id="A0QND0"/>
<dbReference type="KEGG" id="mav:MAV_5308"/>
<dbReference type="HOGENOM" id="CLU_065341_5_0_11"/>
<dbReference type="Proteomes" id="UP000001574">
    <property type="component" value="Chromosome"/>
</dbReference>
<dbReference type="GO" id="GO:0005829">
    <property type="term" value="C:cytosol"/>
    <property type="evidence" value="ECO:0007669"/>
    <property type="project" value="TreeGrafter"/>
</dbReference>
<dbReference type="GO" id="GO:0070043">
    <property type="term" value="F:rRNA (guanine-N7-)-methyltransferase activity"/>
    <property type="evidence" value="ECO:0007669"/>
    <property type="project" value="UniProtKB-UniRule"/>
</dbReference>
<dbReference type="Gene3D" id="3.40.50.150">
    <property type="entry name" value="Vaccinia Virus protein VP39"/>
    <property type="match status" value="1"/>
</dbReference>
<dbReference type="HAMAP" id="MF_00074">
    <property type="entry name" value="16SrRNA_methyltr_G"/>
    <property type="match status" value="1"/>
</dbReference>
<dbReference type="InterPro" id="IPR003682">
    <property type="entry name" value="rRNA_ssu_MeTfrase_G"/>
</dbReference>
<dbReference type="InterPro" id="IPR029063">
    <property type="entry name" value="SAM-dependent_MTases_sf"/>
</dbReference>
<dbReference type="NCBIfam" id="TIGR00138">
    <property type="entry name" value="rsmG_gidB"/>
    <property type="match status" value="1"/>
</dbReference>
<dbReference type="PANTHER" id="PTHR31760">
    <property type="entry name" value="S-ADENOSYL-L-METHIONINE-DEPENDENT METHYLTRANSFERASES SUPERFAMILY PROTEIN"/>
    <property type="match status" value="1"/>
</dbReference>
<dbReference type="PANTHER" id="PTHR31760:SF0">
    <property type="entry name" value="S-ADENOSYL-L-METHIONINE-DEPENDENT METHYLTRANSFERASES SUPERFAMILY PROTEIN"/>
    <property type="match status" value="1"/>
</dbReference>
<dbReference type="Pfam" id="PF02527">
    <property type="entry name" value="GidB"/>
    <property type="match status" value="1"/>
</dbReference>
<dbReference type="PIRSF" id="PIRSF003078">
    <property type="entry name" value="GidB"/>
    <property type="match status" value="1"/>
</dbReference>
<dbReference type="SUPFAM" id="SSF53335">
    <property type="entry name" value="S-adenosyl-L-methionine-dependent methyltransferases"/>
    <property type="match status" value="1"/>
</dbReference>
<proteinExistence type="inferred from homology"/>